<sequence length="328" mass="34922">MADLLNVLKDKLSGKNVKIVLPEGEDERVLTAATQLQATDYVTPIVLGDETKVQSLAQKLDLDISNIELINPATSELKAELVQSFVERRKGKATEEQAQELLNNVNYFGTMLVYAGKADGLVSGAAHSTGDTVRPALQIIKTKPGVSRTSGIFFMIKGDVQYIFGDCAINPELDSQGLAEIAVESAKSALSFGMDPKVAMLSFSTKGSAKSDDVTKVQEAVKLAQQKAEEEKLEAIIDGEFQFDAAIVPGVAEKKAPGAKLQGDANVFVFPSLEAGNIGYKIAQRLGGYDAVGPVLQGLNSPVNDLSRGCSIEDVYNLSIITAAQALQ</sequence>
<organism>
    <name type="scientific">Staphylococcus aureus (strain MW2)</name>
    <dbReference type="NCBI Taxonomy" id="196620"/>
    <lineage>
        <taxon>Bacteria</taxon>
        <taxon>Bacillati</taxon>
        <taxon>Bacillota</taxon>
        <taxon>Bacilli</taxon>
        <taxon>Bacillales</taxon>
        <taxon>Staphylococcaceae</taxon>
        <taxon>Staphylococcus</taxon>
    </lineage>
</organism>
<comment type="catalytic activity">
    <reaction>
        <text>acetyl-CoA + phosphate = acetyl phosphate + CoA</text>
        <dbReference type="Rhea" id="RHEA:19521"/>
        <dbReference type="ChEBI" id="CHEBI:22191"/>
        <dbReference type="ChEBI" id="CHEBI:43474"/>
        <dbReference type="ChEBI" id="CHEBI:57287"/>
        <dbReference type="ChEBI" id="CHEBI:57288"/>
        <dbReference type="EC" id="2.3.1.8"/>
    </reaction>
</comment>
<comment type="pathway">
    <text>Metabolic intermediate biosynthesis; acetyl-CoA biosynthesis; acetyl-CoA from acetate: step 2/2.</text>
</comment>
<comment type="subcellular location">
    <subcellularLocation>
        <location evidence="1">Cytoplasm</location>
    </subcellularLocation>
</comment>
<comment type="similarity">
    <text evidence="1">Belongs to the phosphate acetyltransferase and butyryltransferase family.</text>
</comment>
<protein>
    <recommendedName>
        <fullName>Phosphate acetyltransferase</fullName>
        <ecNumber>2.3.1.8</ecNumber>
    </recommendedName>
    <alternativeName>
        <fullName>Phosphotransacetylase</fullName>
    </alternativeName>
</protein>
<keyword id="KW-0012">Acyltransferase</keyword>
<keyword id="KW-0963">Cytoplasm</keyword>
<keyword id="KW-0808">Transferase</keyword>
<accession>Q8NXW4</accession>
<dbReference type="EC" id="2.3.1.8"/>
<dbReference type="EMBL" id="BA000033">
    <property type="protein sequence ID" value="BAB94408.1"/>
    <property type="molecule type" value="Genomic_DNA"/>
</dbReference>
<dbReference type="RefSeq" id="WP_000774282.1">
    <property type="nucleotide sequence ID" value="NC_003923.1"/>
</dbReference>
<dbReference type="SMR" id="Q8NXW4"/>
<dbReference type="KEGG" id="sam:MW0543"/>
<dbReference type="HOGENOM" id="CLU_019723_0_1_9"/>
<dbReference type="UniPathway" id="UPA00340">
    <property type="reaction ID" value="UER00459"/>
</dbReference>
<dbReference type="GO" id="GO:0005737">
    <property type="term" value="C:cytoplasm"/>
    <property type="evidence" value="ECO:0007669"/>
    <property type="project" value="UniProtKB-SubCell"/>
</dbReference>
<dbReference type="GO" id="GO:0008959">
    <property type="term" value="F:phosphate acetyltransferase activity"/>
    <property type="evidence" value="ECO:0007669"/>
    <property type="project" value="UniProtKB-EC"/>
</dbReference>
<dbReference type="GO" id="GO:0006085">
    <property type="term" value="P:acetyl-CoA biosynthetic process"/>
    <property type="evidence" value="ECO:0007669"/>
    <property type="project" value="UniProtKB-UniPathway"/>
</dbReference>
<dbReference type="Gene3D" id="3.40.50.10950">
    <property type="match status" value="1"/>
</dbReference>
<dbReference type="Gene3D" id="3.40.50.10750">
    <property type="entry name" value="Isocitrate/Isopropylmalate dehydrogenase-like"/>
    <property type="match status" value="1"/>
</dbReference>
<dbReference type="InterPro" id="IPR012147">
    <property type="entry name" value="P_Ac_Bu_trans"/>
</dbReference>
<dbReference type="InterPro" id="IPR004614">
    <property type="entry name" value="P_AcTrfase"/>
</dbReference>
<dbReference type="InterPro" id="IPR042113">
    <property type="entry name" value="P_AcTrfase_dom1"/>
</dbReference>
<dbReference type="InterPro" id="IPR042112">
    <property type="entry name" value="P_AcTrfase_dom2"/>
</dbReference>
<dbReference type="InterPro" id="IPR050500">
    <property type="entry name" value="Phos_Acetyltrans/Butyryltrans"/>
</dbReference>
<dbReference type="InterPro" id="IPR002505">
    <property type="entry name" value="PTA_PTB"/>
</dbReference>
<dbReference type="NCBIfam" id="NF007233">
    <property type="entry name" value="PRK09653.1"/>
    <property type="match status" value="1"/>
</dbReference>
<dbReference type="NCBIfam" id="TIGR00651">
    <property type="entry name" value="pta"/>
    <property type="match status" value="1"/>
</dbReference>
<dbReference type="PANTHER" id="PTHR43356">
    <property type="entry name" value="PHOSPHATE ACETYLTRANSFERASE"/>
    <property type="match status" value="1"/>
</dbReference>
<dbReference type="PANTHER" id="PTHR43356:SF3">
    <property type="entry name" value="PHOSPHATE ACETYLTRANSFERASE"/>
    <property type="match status" value="1"/>
</dbReference>
<dbReference type="Pfam" id="PF01515">
    <property type="entry name" value="PTA_PTB"/>
    <property type="match status" value="1"/>
</dbReference>
<dbReference type="PIRSF" id="PIRSF000428">
    <property type="entry name" value="P_Ac_trans"/>
    <property type="match status" value="1"/>
</dbReference>
<dbReference type="SUPFAM" id="SSF53659">
    <property type="entry name" value="Isocitrate/Isopropylmalate dehydrogenase-like"/>
    <property type="match status" value="1"/>
</dbReference>
<name>PTAS_STAAW</name>
<proteinExistence type="inferred from homology"/>
<reference key="1">
    <citation type="journal article" date="2002" name="Lancet">
        <title>Genome and virulence determinants of high virulence community-acquired MRSA.</title>
        <authorList>
            <person name="Baba T."/>
            <person name="Takeuchi F."/>
            <person name="Kuroda M."/>
            <person name="Yuzawa H."/>
            <person name="Aoki K."/>
            <person name="Oguchi A."/>
            <person name="Nagai Y."/>
            <person name="Iwama N."/>
            <person name="Asano K."/>
            <person name="Naimi T."/>
            <person name="Kuroda H."/>
            <person name="Cui L."/>
            <person name="Yamamoto K."/>
            <person name="Hiramatsu K."/>
        </authorList>
    </citation>
    <scope>NUCLEOTIDE SEQUENCE [LARGE SCALE GENOMIC DNA]</scope>
    <source>
        <strain>MW2</strain>
    </source>
</reference>
<feature type="chain" id="PRO_0000179145" description="Phosphate acetyltransferase">
    <location>
        <begin position="1"/>
        <end position="328"/>
    </location>
</feature>
<gene>
    <name type="primary">pta</name>
    <name type="ordered locus">MW0543</name>
</gene>
<evidence type="ECO:0000305" key="1"/>